<sequence>MSNGIVIIGSGFAARQLVKNIRKQDATIPLTLIAADSMDEYNKPDLSHVISQGQRADDLTRQTAGEFAEQFNLHLFPQTWVTDIDAEARVVKSQNNQWQYDKLVLATGASAFVPPVPGRELMLTLNSQQEYRACETQLRDARRVLIVGGGLIGSELAMDFCRAGKAVTLIDNAASILASLMPPEVSSRLQHRLTEMGVHLLLKSQLQGLEKTDSGIQATLDRQRNIEVDAVIAATGLRPETALARRAGLTINRGVCVDSYLQTSNTDIYALGDCAEINGQVLPFLQPIQLSAMVLAKNLLGNNTPLKLPAMLVKIKTPELPLHLAGETQRQDLRWQINTERQGMVARGVDDADQLRAFVVSEDRMKEAFGLLKTLPM</sequence>
<comment type="function">
    <text evidence="1">One of at least two accessory proteins for anaerobic nitric oxide (NO) reductase. Reduces the rubredoxin moiety of NO reductase.</text>
</comment>
<comment type="catalytic activity">
    <reaction evidence="1">
        <text>2 reduced [nitric oxide reductase rubredoxin domain] + NAD(+) + H(+) = 2 oxidized [nitric oxide reductase rubredoxin domain] + NADH</text>
        <dbReference type="Rhea" id="RHEA:42960"/>
        <dbReference type="Rhea" id="RHEA-COMP:10304"/>
        <dbReference type="Rhea" id="RHEA-COMP:10305"/>
        <dbReference type="ChEBI" id="CHEBI:15378"/>
        <dbReference type="ChEBI" id="CHEBI:29033"/>
        <dbReference type="ChEBI" id="CHEBI:29034"/>
        <dbReference type="ChEBI" id="CHEBI:57540"/>
        <dbReference type="ChEBI" id="CHEBI:57945"/>
    </reaction>
</comment>
<comment type="cofactor">
    <cofactor evidence="1">
        <name>FAD</name>
        <dbReference type="ChEBI" id="CHEBI:57692"/>
    </cofactor>
</comment>
<comment type="pathway">
    <text evidence="1">Nitrogen metabolism; nitric oxide reduction.</text>
</comment>
<comment type="subcellular location">
    <subcellularLocation>
        <location evidence="1">Cytoplasm</location>
    </subcellularLocation>
</comment>
<comment type="similarity">
    <text evidence="1">Belongs to the FAD-dependent oxidoreductase family.</text>
</comment>
<gene>
    <name evidence="1" type="primary">norW</name>
    <name evidence="1" type="synonym">flrR</name>
    <name type="ordered locus">BWG_2447</name>
</gene>
<proteinExistence type="inferred from homology"/>
<accession>C4ZYV6</accession>
<evidence type="ECO:0000255" key="1">
    <source>
        <dbReference type="HAMAP-Rule" id="MF_01313"/>
    </source>
</evidence>
<feature type="chain" id="PRO_1000214381" description="Nitric oxide reductase FlRd-NAD(+) reductase">
    <location>
        <begin position="1"/>
        <end position="377"/>
    </location>
</feature>
<keyword id="KW-0963">Cytoplasm</keyword>
<keyword id="KW-0274">FAD</keyword>
<keyword id="KW-0285">Flavoprotein</keyword>
<keyword id="KW-0520">NAD</keyword>
<keyword id="KW-0560">Oxidoreductase</keyword>
<protein>
    <recommendedName>
        <fullName evidence="1">Nitric oxide reductase FlRd-NAD(+) reductase</fullName>
        <ecNumber evidence="1">1.18.1.-</ecNumber>
    </recommendedName>
    <alternativeName>
        <fullName evidence="1">Flavorubredoxin reductase</fullName>
        <shortName evidence="1">FlRd-reductase</shortName>
        <shortName evidence="1">FlavoRb reductase</shortName>
    </alternativeName>
</protein>
<dbReference type="EC" id="1.18.1.-" evidence="1"/>
<dbReference type="EMBL" id="CP001396">
    <property type="protein sequence ID" value="ACR63864.1"/>
    <property type="molecule type" value="Genomic_DNA"/>
</dbReference>
<dbReference type="RefSeq" id="WP_000064752.1">
    <property type="nucleotide sequence ID" value="NC_012759.1"/>
</dbReference>
<dbReference type="SMR" id="C4ZYV6"/>
<dbReference type="KEGG" id="ebw:BWG_2447"/>
<dbReference type="HOGENOM" id="CLU_003291_4_4_6"/>
<dbReference type="UniPathway" id="UPA00638"/>
<dbReference type="GO" id="GO:0005737">
    <property type="term" value="C:cytoplasm"/>
    <property type="evidence" value="ECO:0007669"/>
    <property type="project" value="UniProtKB-SubCell"/>
</dbReference>
<dbReference type="GO" id="GO:0016731">
    <property type="term" value="F:oxidoreductase activity, acting on iron-sulfur proteins as donors, NAD or NADP as acceptor"/>
    <property type="evidence" value="ECO:0007669"/>
    <property type="project" value="UniProtKB-UniRule"/>
</dbReference>
<dbReference type="FunFam" id="3.30.390.120:FF:000001">
    <property type="entry name" value="Nitric oxide reductase FlRd-NAD(+) reductase"/>
    <property type="match status" value="1"/>
</dbReference>
<dbReference type="FunFam" id="3.50.50.60:FF:000075">
    <property type="entry name" value="Nitric oxide reductase FlRd-NAD(+) reductase"/>
    <property type="match status" value="1"/>
</dbReference>
<dbReference type="Gene3D" id="3.30.390.120">
    <property type="match status" value="1"/>
</dbReference>
<dbReference type="Gene3D" id="3.50.50.60">
    <property type="entry name" value="FAD/NAD(P)-binding domain"/>
    <property type="match status" value="2"/>
</dbReference>
<dbReference type="HAMAP" id="MF_01313">
    <property type="entry name" value="NorW"/>
    <property type="match status" value="1"/>
</dbReference>
<dbReference type="InterPro" id="IPR050260">
    <property type="entry name" value="FAD-bd_OxRdtase"/>
</dbReference>
<dbReference type="InterPro" id="IPR036188">
    <property type="entry name" value="FAD/NAD-bd_sf"/>
</dbReference>
<dbReference type="InterPro" id="IPR023753">
    <property type="entry name" value="FAD/NAD-binding_dom"/>
</dbReference>
<dbReference type="InterPro" id="IPR023961">
    <property type="entry name" value="NO_rdtase_NorW"/>
</dbReference>
<dbReference type="InterPro" id="IPR041364">
    <property type="entry name" value="Rbx-bd"/>
</dbReference>
<dbReference type="NCBIfam" id="NF003437">
    <property type="entry name" value="PRK04965.1"/>
    <property type="match status" value="1"/>
</dbReference>
<dbReference type="PANTHER" id="PTHR43429:SF3">
    <property type="entry name" value="NITRITE REDUCTASE [NAD(P)H]"/>
    <property type="match status" value="1"/>
</dbReference>
<dbReference type="PANTHER" id="PTHR43429">
    <property type="entry name" value="PYRIDINE NUCLEOTIDE-DISULFIDE OXIDOREDUCTASE DOMAIN-CONTAINING"/>
    <property type="match status" value="1"/>
</dbReference>
<dbReference type="Pfam" id="PF07992">
    <property type="entry name" value="Pyr_redox_2"/>
    <property type="match status" value="1"/>
</dbReference>
<dbReference type="Pfam" id="PF18113">
    <property type="entry name" value="Rbx_binding"/>
    <property type="match status" value="1"/>
</dbReference>
<dbReference type="PRINTS" id="PR00368">
    <property type="entry name" value="FADPNR"/>
</dbReference>
<dbReference type="PRINTS" id="PR00411">
    <property type="entry name" value="PNDRDTASEI"/>
</dbReference>
<dbReference type="SUPFAM" id="SSF51905">
    <property type="entry name" value="FAD/NAD(P)-binding domain"/>
    <property type="match status" value="1"/>
</dbReference>
<reference key="1">
    <citation type="journal article" date="2009" name="J. Bacteriol.">
        <title>Genomic sequencing reveals regulatory mutations and recombinational events in the widely used MC4100 lineage of Escherichia coli K-12.</title>
        <authorList>
            <person name="Ferenci T."/>
            <person name="Zhou Z."/>
            <person name="Betteridge T."/>
            <person name="Ren Y."/>
            <person name="Liu Y."/>
            <person name="Feng L."/>
            <person name="Reeves P.R."/>
            <person name="Wang L."/>
        </authorList>
    </citation>
    <scope>NUCLEOTIDE SEQUENCE [LARGE SCALE GENOMIC DNA]</scope>
    <source>
        <strain>K12 / MC4100 / BW2952</strain>
    </source>
</reference>
<organism>
    <name type="scientific">Escherichia coli (strain K12 / MC4100 / BW2952)</name>
    <dbReference type="NCBI Taxonomy" id="595496"/>
    <lineage>
        <taxon>Bacteria</taxon>
        <taxon>Pseudomonadati</taxon>
        <taxon>Pseudomonadota</taxon>
        <taxon>Gammaproteobacteria</taxon>
        <taxon>Enterobacterales</taxon>
        <taxon>Enterobacteriaceae</taxon>
        <taxon>Escherichia</taxon>
    </lineage>
</organism>
<name>NORW_ECOBW</name>